<feature type="chain" id="PRO_1000139185" description="Bifunctional protein PyrR">
    <location>
        <begin position="1"/>
        <end position="180"/>
    </location>
</feature>
<feature type="short sequence motif" description="PRPP-binding" evidence="1">
    <location>
        <begin position="101"/>
        <end position="113"/>
    </location>
</feature>
<comment type="function">
    <text evidence="1">Regulates transcriptional attenuation of the pyrimidine nucleotide (pyr) operon by binding in a uridine-dependent manner to specific sites on pyr mRNA. This disrupts an antiterminator hairpin in the RNA and favors formation of a downstream transcription terminator, leading to a reduced expression of downstream genes.</text>
</comment>
<comment type="function">
    <text evidence="1">Also displays a weak uracil phosphoribosyltransferase activity which is not physiologically significant.</text>
</comment>
<comment type="catalytic activity">
    <reaction evidence="1">
        <text>UMP + diphosphate = 5-phospho-alpha-D-ribose 1-diphosphate + uracil</text>
        <dbReference type="Rhea" id="RHEA:13017"/>
        <dbReference type="ChEBI" id="CHEBI:17568"/>
        <dbReference type="ChEBI" id="CHEBI:33019"/>
        <dbReference type="ChEBI" id="CHEBI:57865"/>
        <dbReference type="ChEBI" id="CHEBI:58017"/>
        <dbReference type="EC" id="2.4.2.9"/>
    </reaction>
</comment>
<comment type="subunit">
    <text evidence="1">Homodimer and homohexamer; in equilibrium.</text>
</comment>
<comment type="similarity">
    <text evidence="1">Belongs to the purine/pyrimidine phosphoribosyltransferase family. PyrR subfamily.</text>
</comment>
<organism>
    <name type="scientific">Bacillus cereus (strain G9842)</name>
    <dbReference type="NCBI Taxonomy" id="405531"/>
    <lineage>
        <taxon>Bacteria</taxon>
        <taxon>Bacillati</taxon>
        <taxon>Bacillota</taxon>
        <taxon>Bacilli</taxon>
        <taxon>Bacillales</taxon>
        <taxon>Bacillaceae</taxon>
        <taxon>Bacillus</taxon>
        <taxon>Bacillus cereus group</taxon>
    </lineage>
</organism>
<protein>
    <recommendedName>
        <fullName evidence="1">Bifunctional protein PyrR</fullName>
    </recommendedName>
    <domain>
        <recommendedName>
            <fullName evidence="1">Pyrimidine operon regulatory protein</fullName>
        </recommendedName>
    </domain>
    <domain>
        <recommendedName>
            <fullName evidence="1">Uracil phosphoribosyltransferase</fullName>
            <shortName evidence="1">UPRTase</shortName>
            <ecNumber evidence="1">2.4.2.9</ecNumber>
        </recommendedName>
    </domain>
</protein>
<accession>B7IUQ1</accession>
<reference key="1">
    <citation type="submission" date="2008-10" db="EMBL/GenBank/DDBJ databases">
        <title>Genome sequence of Bacillus cereus G9842.</title>
        <authorList>
            <person name="Dodson R.J."/>
            <person name="Durkin A.S."/>
            <person name="Rosovitz M.J."/>
            <person name="Rasko D.A."/>
            <person name="Hoffmaster A."/>
            <person name="Ravel J."/>
            <person name="Sutton G."/>
        </authorList>
    </citation>
    <scope>NUCLEOTIDE SEQUENCE [LARGE SCALE GENOMIC DNA]</scope>
    <source>
        <strain>G9842</strain>
    </source>
</reference>
<evidence type="ECO:0000255" key="1">
    <source>
        <dbReference type="HAMAP-Rule" id="MF_01219"/>
    </source>
</evidence>
<proteinExistence type="inferred from homology"/>
<gene>
    <name evidence="1" type="primary">pyrR</name>
    <name type="ordered locus">BCG9842_B1250</name>
</gene>
<name>PYRR_BACC2</name>
<sequence length="180" mass="20409">MQEKAVVLDDQMIRRALTRISHEIVERNKGVDNCVLVGIKTRGIFIAQRLAERIGQIEGKEMEVGELDITLYRDDLTLQSKNKEPLVKGSDIPVDITKKKVILVDDVLYTGRTVRAAMDALMDLGRPSQIQLAVLVDRGHRELPIRADYVGKNIPTSSEERIEVDLQETDQQDRVSIYDK</sequence>
<dbReference type="EC" id="2.4.2.9" evidence="1"/>
<dbReference type="EMBL" id="CP001186">
    <property type="protein sequence ID" value="ACK93939.1"/>
    <property type="molecule type" value="Genomic_DNA"/>
</dbReference>
<dbReference type="RefSeq" id="WP_001156491.1">
    <property type="nucleotide sequence ID" value="NC_011772.1"/>
</dbReference>
<dbReference type="SMR" id="B7IUQ1"/>
<dbReference type="GeneID" id="75087028"/>
<dbReference type="KEGG" id="bcg:BCG9842_B1250"/>
<dbReference type="HOGENOM" id="CLU_094234_2_1_9"/>
<dbReference type="Proteomes" id="UP000006744">
    <property type="component" value="Chromosome"/>
</dbReference>
<dbReference type="GO" id="GO:0003723">
    <property type="term" value="F:RNA binding"/>
    <property type="evidence" value="ECO:0007669"/>
    <property type="project" value="UniProtKB-UniRule"/>
</dbReference>
<dbReference type="GO" id="GO:0004845">
    <property type="term" value="F:uracil phosphoribosyltransferase activity"/>
    <property type="evidence" value="ECO:0007669"/>
    <property type="project" value="UniProtKB-UniRule"/>
</dbReference>
<dbReference type="GO" id="GO:0006353">
    <property type="term" value="P:DNA-templated transcription termination"/>
    <property type="evidence" value="ECO:0007669"/>
    <property type="project" value="UniProtKB-UniRule"/>
</dbReference>
<dbReference type="CDD" id="cd06223">
    <property type="entry name" value="PRTases_typeI"/>
    <property type="match status" value="1"/>
</dbReference>
<dbReference type="FunFam" id="3.40.50.2020:FF:000020">
    <property type="entry name" value="Bifunctional protein PyrR"/>
    <property type="match status" value="1"/>
</dbReference>
<dbReference type="Gene3D" id="3.40.50.2020">
    <property type="match status" value="1"/>
</dbReference>
<dbReference type="HAMAP" id="MF_01219">
    <property type="entry name" value="PyrR"/>
    <property type="match status" value="1"/>
</dbReference>
<dbReference type="InterPro" id="IPR000836">
    <property type="entry name" value="PRibTrfase_dom"/>
</dbReference>
<dbReference type="InterPro" id="IPR029057">
    <property type="entry name" value="PRTase-like"/>
</dbReference>
<dbReference type="InterPro" id="IPR023050">
    <property type="entry name" value="PyrR"/>
</dbReference>
<dbReference type="InterPro" id="IPR050137">
    <property type="entry name" value="PyrR_bifunctional"/>
</dbReference>
<dbReference type="NCBIfam" id="NF003545">
    <property type="entry name" value="PRK05205.1-1"/>
    <property type="match status" value="1"/>
</dbReference>
<dbReference type="NCBIfam" id="NF003547">
    <property type="entry name" value="PRK05205.1-3"/>
    <property type="match status" value="1"/>
</dbReference>
<dbReference type="NCBIfam" id="NF003548">
    <property type="entry name" value="PRK05205.1-4"/>
    <property type="match status" value="1"/>
</dbReference>
<dbReference type="NCBIfam" id="NF003549">
    <property type="entry name" value="PRK05205.1-5"/>
    <property type="match status" value="1"/>
</dbReference>
<dbReference type="PANTHER" id="PTHR11608">
    <property type="entry name" value="BIFUNCTIONAL PROTEIN PYRR"/>
    <property type="match status" value="1"/>
</dbReference>
<dbReference type="PANTHER" id="PTHR11608:SF0">
    <property type="entry name" value="BIFUNCTIONAL PROTEIN PYRR"/>
    <property type="match status" value="1"/>
</dbReference>
<dbReference type="Pfam" id="PF00156">
    <property type="entry name" value="Pribosyltran"/>
    <property type="match status" value="1"/>
</dbReference>
<dbReference type="SUPFAM" id="SSF53271">
    <property type="entry name" value="PRTase-like"/>
    <property type="match status" value="1"/>
</dbReference>
<keyword id="KW-0328">Glycosyltransferase</keyword>
<keyword id="KW-0694">RNA-binding</keyword>
<keyword id="KW-0804">Transcription</keyword>
<keyword id="KW-0805">Transcription regulation</keyword>
<keyword id="KW-0806">Transcription termination</keyword>
<keyword id="KW-0808">Transferase</keyword>